<organism>
    <name type="scientific">Prochlorococcus marinus (strain MIT 9313)</name>
    <dbReference type="NCBI Taxonomy" id="74547"/>
    <lineage>
        <taxon>Bacteria</taxon>
        <taxon>Bacillati</taxon>
        <taxon>Cyanobacteriota</taxon>
        <taxon>Cyanophyceae</taxon>
        <taxon>Synechococcales</taxon>
        <taxon>Prochlorococcaceae</taxon>
        <taxon>Prochlorococcus</taxon>
    </lineage>
</organism>
<accession>Q7V8Y4</accession>
<feature type="chain" id="PRO_0000204405" description="Photosystem I reaction center subunit IV">
    <location>
        <begin position="1"/>
        <end position="68"/>
    </location>
</feature>
<evidence type="ECO:0000250" key="1"/>
<evidence type="ECO:0000305" key="2"/>
<proteinExistence type="inferred from homology"/>
<sequence length="68" mass="7648">MAISKGDKVRIRREESYWHNEVGTVASVDTTGKYGVLVRFEKTNYFGMQGTDNGNLTNSFAESELDRA</sequence>
<dbReference type="EMBL" id="BX548175">
    <property type="protein sequence ID" value="CAE20362.1"/>
    <property type="molecule type" value="Genomic_DNA"/>
</dbReference>
<dbReference type="RefSeq" id="WP_011129566.1">
    <property type="nucleotide sequence ID" value="NC_005071.1"/>
</dbReference>
<dbReference type="SMR" id="Q7V8Y4"/>
<dbReference type="KEGG" id="pmt:PMT_0187"/>
<dbReference type="eggNOG" id="ENOG503313D">
    <property type="taxonomic scope" value="Bacteria"/>
</dbReference>
<dbReference type="HOGENOM" id="CLU_136462_2_1_3"/>
<dbReference type="OrthoDB" id="427926at2"/>
<dbReference type="Proteomes" id="UP000001423">
    <property type="component" value="Chromosome"/>
</dbReference>
<dbReference type="GO" id="GO:0009538">
    <property type="term" value="C:photosystem I reaction center"/>
    <property type="evidence" value="ECO:0007669"/>
    <property type="project" value="InterPro"/>
</dbReference>
<dbReference type="GO" id="GO:0031676">
    <property type="term" value="C:plasma membrane-derived thylakoid membrane"/>
    <property type="evidence" value="ECO:0007669"/>
    <property type="project" value="UniProtKB-SubCell"/>
</dbReference>
<dbReference type="GO" id="GO:0015979">
    <property type="term" value="P:photosynthesis"/>
    <property type="evidence" value="ECO:0007669"/>
    <property type="project" value="UniProtKB-UniRule"/>
</dbReference>
<dbReference type="Gene3D" id="2.30.30.50">
    <property type="match status" value="1"/>
</dbReference>
<dbReference type="HAMAP" id="MF_00613">
    <property type="entry name" value="PSI_PsaE"/>
    <property type="match status" value="1"/>
</dbReference>
<dbReference type="InterPro" id="IPR008990">
    <property type="entry name" value="Elect_transpt_acc-like_dom_sf"/>
</dbReference>
<dbReference type="InterPro" id="IPR003375">
    <property type="entry name" value="PSI_PsaE"/>
</dbReference>
<dbReference type="NCBIfam" id="NF002745">
    <property type="entry name" value="PRK02749.1"/>
    <property type="match status" value="1"/>
</dbReference>
<dbReference type="PANTHER" id="PTHR34549">
    <property type="entry name" value="PHOTOSYSTEM I REACTION CENTER SUBUNIT IV A, CHLOROPLASTIC-RELATED"/>
    <property type="match status" value="1"/>
</dbReference>
<dbReference type="PANTHER" id="PTHR34549:SF2">
    <property type="entry name" value="PHOTOSYSTEM I SUBUNIT IV"/>
    <property type="match status" value="1"/>
</dbReference>
<dbReference type="Pfam" id="PF02427">
    <property type="entry name" value="PSI_PsaE"/>
    <property type="match status" value="1"/>
</dbReference>
<dbReference type="SUPFAM" id="SSF50090">
    <property type="entry name" value="Electron transport accessory proteins"/>
    <property type="match status" value="1"/>
</dbReference>
<reference key="1">
    <citation type="journal article" date="2003" name="Nature">
        <title>Genome divergence in two Prochlorococcus ecotypes reflects oceanic niche differentiation.</title>
        <authorList>
            <person name="Rocap G."/>
            <person name="Larimer F.W."/>
            <person name="Lamerdin J.E."/>
            <person name="Malfatti S."/>
            <person name="Chain P."/>
            <person name="Ahlgren N.A."/>
            <person name="Arellano A."/>
            <person name="Coleman M."/>
            <person name="Hauser L."/>
            <person name="Hess W.R."/>
            <person name="Johnson Z.I."/>
            <person name="Land M.L."/>
            <person name="Lindell D."/>
            <person name="Post A.F."/>
            <person name="Regala W."/>
            <person name="Shah M."/>
            <person name="Shaw S.L."/>
            <person name="Steglich C."/>
            <person name="Sullivan M.B."/>
            <person name="Ting C.S."/>
            <person name="Tolonen A."/>
            <person name="Webb E.A."/>
            <person name="Zinser E.R."/>
            <person name="Chisholm S.W."/>
        </authorList>
    </citation>
    <scope>NUCLEOTIDE SEQUENCE [LARGE SCALE GENOMIC DNA]</scope>
    <source>
        <strain>MIT 9313</strain>
    </source>
</reference>
<name>PSAE_PROMM</name>
<comment type="function">
    <text evidence="1">Stabilizes the interaction between PsaC and the PSI core, assists the docking of the ferredoxin to PSI and interacts with ferredoxin-NADP oxidoreductase.</text>
</comment>
<comment type="subcellular location">
    <subcellularLocation>
        <location evidence="1">Cellular thylakoid membrane</location>
        <topology evidence="1">Peripheral membrane protein</topology>
    </subcellularLocation>
</comment>
<comment type="similarity">
    <text evidence="2">Belongs to the PsaE family.</text>
</comment>
<protein>
    <recommendedName>
        <fullName>Photosystem I reaction center subunit IV</fullName>
    </recommendedName>
</protein>
<keyword id="KW-0472">Membrane</keyword>
<keyword id="KW-0602">Photosynthesis</keyword>
<keyword id="KW-0603">Photosystem I</keyword>
<keyword id="KW-1185">Reference proteome</keyword>
<keyword id="KW-0793">Thylakoid</keyword>
<gene>
    <name type="primary">psaE</name>
    <name type="ordered locus">PMT_0187</name>
</gene>